<name>NADD_YERPY</name>
<keyword id="KW-0067">ATP-binding</keyword>
<keyword id="KW-0520">NAD</keyword>
<keyword id="KW-0547">Nucleotide-binding</keyword>
<keyword id="KW-0548">Nucleotidyltransferase</keyword>
<keyword id="KW-0662">Pyridine nucleotide biosynthesis</keyword>
<keyword id="KW-0808">Transferase</keyword>
<protein>
    <recommendedName>
        <fullName evidence="1">Probable nicotinate-nucleotide adenylyltransferase</fullName>
        <ecNumber evidence="1">2.7.7.18</ecNumber>
    </recommendedName>
    <alternativeName>
        <fullName evidence="1">Deamido-NAD(+) diphosphorylase</fullName>
    </alternativeName>
    <alternativeName>
        <fullName evidence="1">Deamido-NAD(+) pyrophosphorylase</fullName>
    </alternativeName>
    <alternativeName>
        <fullName evidence="1">Nicotinate mononucleotide adenylyltransferase</fullName>
        <shortName evidence="1">NaMN adenylyltransferase</shortName>
    </alternativeName>
</protein>
<feature type="chain" id="PRO_1000100806" description="Probable nicotinate-nucleotide adenylyltransferase">
    <location>
        <begin position="1"/>
        <end position="220"/>
    </location>
</feature>
<comment type="function">
    <text evidence="1">Catalyzes the reversible adenylation of nicotinate mononucleotide (NaMN) to nicotinic acid adenine dinucleotide (NaAD).</text>
</comment>
<comment type="catalytic activity">
    <reaction evidence="1">
        <text>nicotinate beta-D-ribonucleotide + ATP + H(+) = deamido-NAD(+) + diphosphate</text>
        <dbReference type="Rhea" id="RHEA:22860"/>
        <dbReference type="ChEBI" id="CHEBI:15378"/>
        <dbReference type="ChEBI" id="CHEBI:30616"/>
        <dbReference type="ChEBI" id="CHEBI:33019"/>
        <dbReference type="ChEBI" id="CHEBI:57502"/>
        <dbReference type="ChEBI" id="CHEBI:58437"/>
        <dbReference type="EC" id="2.7.7.18"/>
    </reaction>
</comment>
<comment type="pathway">
    <text evidence="1">Cofactor biosynthesis; NAD(+) biosynthesis; deamido-NAD(+) from nicotinate D-ribonucleotide: step 1/1.</text>
</comment>
<comment type="similarity">
    <text evidence="1">Belongs to the NadD family.</text>
</comment>
<accession>B1JGA8</accession>
<reference key="1">
    <citation type="submission" date="2008-02" db="EMBL/GenBank/DDBJ databases">
        <title>Complete sequence of Yersinia pseudotuberculosis YPIII.</title>
        <authorList>
            <consortium name="US DOE Joint Genome Institute"/>
            <person name="Copeland A."/>
            <person name="Lucas S."/>
            <person name="Lapidus A."/>
            <person name="Glavina del Rio T."/>
            <person name="Dalin E."/>
            <person name="Tice H."/>
            <person name="Bruce D."/>
            <person name="Goodwin L."/>
            <person name="Pitluck S."/>
            <person name="Munk A.C."/>
            <person name="Brettin T."/>
            <person name="Detter J.C."/>
            <person name="Han C."/>
            <person name="Tapia R."/>
            <person name="Schmutz J."/>
            <person name="Larimer F."/>
            <person name="Land M."/>
            <person name="Hauser L."/>
            <person name="Challacombe J.F."/>
            <person name="Green L."/>
            <person name="Lindler L.E."/>
            <person name="Nikolich M.P."/>
            <person name="Richardson P."/>
        </authorList>
    </citation>
    <scope>NUCLEOTIDE SEQUENCE [LARGE SCALE GENOMIC DNA]</scope>
    <source>
        <strain>YPIII</strain>
    </source>
</reference>
<proteinExistence type="inferred from homology"/>
<evidence type="ECO:0000255" key="1">
    <source>
        <dbReference type="HAMAP-Rule" id="MF_00244"/>
    </source>
</evidence>
<organism>
    <name type="scientific">Yersinia pseudotuberculosis serotype O:3 (strain YPIII)</name>
    <dbReference type="NCBI Taxonomy" id="502800"/>
    <lineage>
        <taxon>Bacteria</taxon>
        <taxon>Pseudomonadati</taxon>
        <taxon>Pseudomonadota</taxon>
        <taxon>Gammaproteobacteria</taxon>
        <taxon>Enterobacterales</taxon>
        <taxon>Yersiniaceae</taxon>
        <taxon>Yersinia</taxon>
    </lineage>
</organism>
<sequence>MPIKSSDHSLYALFGGTFDPIHYGHLKPVEALAQQVGLQHIILLPNHVPPHRPQPEANAQQRLKMVELAVAGNPLFSVDSRELLRDSPSFTIETLEALRKERGAEQPLAFIIGQDSLLSLHKWHRWQALLDVCHLLVCARPGYSQSLETPELQQWLESHKVMDPQALSQRPHGAIYLADTPLLDISATDIRRRRHNGESCDDLLPQAVQRYIELQGLYRG</sequence>
<gene>
    <name evidence="1" type="primary">nadD</name>
    <name type="ordered locus">YPK_3018</name>
</gene>
<dbReference type="EC" id="2.7.7.18" evidence="1"/>
<dbReference type="EMBL" id="CP000950">
    <property type="protein sequence ID" value="ACA69291.1"/>
    <property type="molecule type" value="Genomic_DNA"/>
</dbReference>
<dbReference type="RefSeq" id="WP_002210330.1">
    <property type="nucleotide sequence ID" value="NZ_CP009792.1"/>
</dbReference>
<dbReference type="SMR" id="B1JGA8"/>
<dbReference type="GeneID" id="57976088"/>
<dbReference type="KEGG" id="ypy:YPK_3018"/>
<dbReference type="PATRIC" id="fig|502800.11.peg.3739"/>
<dbReference type="UniPathway" id="UPA00253">
    <property type="reaction ID" value="UER00332"/>
</dbReference>
<dbReference type="GO" id="GO:0005524">
    <property type="term" value="F:ATP binding"/>
    <property type="evidence" value="ECO:0007669"/>
    <property type="project" value="UniProtKB-KW"/>
</dbReference>
<dbReference type="GO" id="GO:0004515">
    <property type="term" value="F:nicotinate-nucleotide adenylyltransferase activity"/>
    <property type="evidence" value="ECO:0007669"/>
    <property type="project" value="UniProtKB-UniRule"/>
</dbReference>
<dbReference type="GO" id="GO:0009435">
    <property type="term" value="P:NAD biosynthetic process"/>
    <property type="evidence" value="ECO:0007669"/>
    <property type="project" value="UniProtKB-UniRule"/>
</dbReference>
<dbReference type="CDD" id="cd02165">
    <property type="entry name" value="NMNAT"/>
    <property type="match status" value="1"/>
</dbReference>
<dbReference type="FunFam" id="3.40.50.620:FF:000039">
    <property type="entry name" value="Probable nicotinate-nucleotide adenylyltransferase"/>
    <property type="match status" value="1"/>
</dbReference>
<dbReference type="Gene3D" id="3.40.50.620">
    <property type="entry name" value="HUPs"/>
    <property type="match status" value="1"/>
</dbReference>
<dbReference type="HAMAP" id="MF_00244">
    <property type="entry name" value="NaMN_adenylyltr"/>
    <property type="match status" value="1"/>
</dbReference>
<dbReference type="InterPro" id="IPR004821">
    <property type="entry name" value="Cyt_trans-like"/>
</dbReference>
<dbReference type="InterPro" id="IPR005248">
    <property type="entry name" value="NadD/NMNAT"/>
</dbReference>
<dbReference type="InterPro" id="IPR014729">
    <property type="entry name" value="Rossmann-like_a/b/a_fold"/>
</dbReference>
<dbReference type="NCBIfam" id="TIGR00125">
    <property type="entry name" value="cyt_tran_rel"/>
    <property type="match status" value="1"/>
</dbReference>
<dbReference type="NCBIfam" id="TIGR00482">
    <property type="entry name" value="nicotinate (nicotinamide) nucleotide adenylyltransferase"/>
    <property type="match status" value="1"/>
</dbReference>
<dbReference type="NCBIfam" id="NF000839">
    <property type="entry name" value="PRK00071.1-1"/>
    <property type="match status" value="1"/>
</dbReference>
<dbReference type="NCBIfam" id="NF000840">
    <property type="entry name" value="PRK00071.1-3"/>
    <property type="match status" value="1"/>
</dbReference>
<dbReference type="PANTHER" id="PTHR39321">
    <property type="entry name" value="NICOTINATE-NUCLEOTIDE ADENYLYLTRANSFERASE-RELATED"/>
    <property type="match status" value="1"/>
</dbReference>
<dbReference type="PANTHER" id="PTHR39321:SF3">
    <property type="entry name" value="PHOSPHOPANTETHEINE ADENYLYLTRANSFERASE"/>
    <property type="match status" value="1"/>
</dbReference>
<dbReference type="Pfam" id="PF01467">
    <property type="entry name" value="CTP_transf_like"/>
    <property type="match status" value="1"/>
</dbReference>
<dbReference type="SUPFAM" id="SSF52374">
    <property type="entry name" value="Nucleotidylyl transferase"/>
    <property type="match status" value="1"/>
</dbReference>